<protein>
    <recommendedName>
        <fullName>Matrix protein</fullName>
    </recommendedName>
    <alternativeName>
        <fullName evidence="18">M protein</fullName>
    </alternativeName>
</protein>
<reference key="1">
    <citation type="journal article" date="1984" name="J. Virol.">
        <title>Nucleotide sequence of the gene encoding respiratory syncytial virus matrix protein.</title>
        <authorList>
            <person name="Satake M."/>
            <person name="Venkatesan S."/>
        </authorList>
    </citation>
    <scope>NUCLEOTIDE SEQUENCE [GENOMIC RNA]</scope>
</reference>
<reference key="2">
    <citation type="journal article" date="1995" name="Virology">
        <title>A cold-passaged, attenuated strain of human respiratory syncytial virus contains mutations in the F and L genes.</title>
        <authorList>
            <person name="Connors M."/>
            <person name="Crowe J.E. Jr."/>
            <person name="Firestone C.Y."/>
            <person name="Murphy B.R."/>
            <person name="Collins P.L."/>
        </authorList>
    </citation>
    <scope>NUCLEOTIDE SEQUENCE [GENOMIC RNA]</scope>
</reference>
<reference key="3">
    <citation type="journal article" date="1996" name="Virus Genes">
        <title>Acquisition of the ts phenotype by a chemically mutagenized cold-passaged human respiratory syncytial virus vaccine candidate results from the acquisition of a single mutation in the polymerase (L) gene.</title>
        <authorList>
            <person name="Crowe J.E. Jr."/>
            <person name="Firestone C.Y."/>
            <person name="Whitehead S.S."/>
            <person name="Collins P.L."/>
            <person name="Murphy B.R."/>
        </authorList>
    </citation>
    <scope>NUCLEOTIDE SEQUENCE [GENOMIC RNA]</scope>
</reference>
<reference key="4">
    <citation type="journal article" date="1998" name="J. Virol.">
        <title>Recombinant respiratory syncytial virus (RSV) bearing a set of mutations from cold-passaged RSV is attenuated in chimpanzees.</title>
        <authorList>
            <person name="Whitehead S.S."/>
            <person name="Juhasz K."/>
            <person name="Firestone C.Y."/>
            <person name="Collins P.L."/>
            <person name="Murphy B.R."/>
        </authorList>
    </citation>
    <scope>NUCLEOTIDE SEQUENCE [GENOMIC RNA]</scope>
    <source>
        <strain>Cold-passage attenuated</strain>
    </source>
</reference>
<reference key="5">
    <citation type="journal article" date="2002" name="J. Gen. Virol.">
        <title>Respiratory syncytial virus matrix protein associates with nucleocapsids in infected cells.</title>
        <authorList>
            <person name="Ghildyal R."/>
            <person name="Mills J."/>
            <person name="Murray M."/>
            <person name="Vardaxis N."/>
            <person name="Meanger J."/>
        </authorList>
    </citation>
    <scope>FUNCTION</scope>
</reference>
<reference key="6">
    <citation type="journal article" date="2002" name="Virology">
        <title>Sorting of the respiratory syncytial virus matrix protein into detergent-resistant structures is dependent on cell-surface expression of the glycoproteins.</title>
        <authorList>
            <person name="Henderson G."/>
            <person name="Murray J."/>
            <person name="Yeo R.P."/>
        </authorList>
    </citation>
    <scope>SUBCELLULAR LOCATION</scope>
    <scope>ASSOCIATION WITH LIPID RAFTS</scope>
    <scope>FUNCTION</scope>
</reference>
<reference key="7">
    <citation type="journal article" date="2003" name="Arch. Virol.">
        <title>The matrix protein of Human respiratory syncytial virus localises to the nucleus of infected cells and inhibits transcription.</title>
        <authorList>
            <person name="Ghildyal R."/>
            <person name="Baulch-Brown C."/>
            <person name="Mills J."/>
            <person name="Meanger J."/>
        </authorList>
    </citation>
    <scope>FUNCTION</scope>
    <scope>SUBCELLULAR LOCATION</scope>
</reference>
<reference key="8">
    <citation type="journal article" date="2005" name="J. Gen. Virol.">
        <title>Interaction between the respiratory syncytial virus G glycoprotein cytoplasmic domain and the matrix protein.</title>
        <authorList>
            <person name="Ghildyal R."/>
            <person name="Li D."/>
            <person name="Peroulis I."/>
            <person name="Shields B."/>
            <person name="Bardin P.G."/>
            <person name="Teng M.N."/>
            <person name="Collins P.L."/>
            <person name="Meanger J."/>
            <person name="Mills J."/>
        </authorList>
    </citation>
    <scope>INTERACTION WITH G</scope>
    <scope>SUBCELLULAR LOCATION</scope>
    <scope>FUNCTION</scope>
</reference>
<reference key="9">
    <citation type="journal article" date="2005" name="Biochemistry">
        <title>Nuclear import of the respiratory syncytial virus matrix protein is mediated by importin beta1 independent of importin alpha.</title>
        <authorList>
            <person name="Ghildyal R."/>
            <person name="Ho A."/>
            <person name="Wagstaff K.M."/>
            <person name="Dias M.M."/>
            <person name="Barton C.L."/>
            <person name="Jans P."/>
            <person name="Bardin P.G."/>
            <person name="Jans D.A."/>
        </authorList>
    </citation>
    <scope>INTERACTION WITH HOST KPNB1</scope>
    <scope>SUBCELLULAR LOCATION</scope>
</reference>
<reference key="10">
    <citation type="journal article" date="2008" name="J. Virol.">
        <title>Association of respiratory syncytial virus M protein with viral nucleocapsids is mediated by the M2-1 protein.</title>
        <authorList>
            <person name="Li D."/>
            <person name="Jans D.A."/>
            <person name="Bardin P.G."/>
            <person name="Meanger J."/>
            <person name="Mills J."/>
            <person name="Ghildyal R."/>
        </authorList>
    </citation>
    <scope>INTERACTION WITH M2-1</scope>
    <scope>FUNCTION</scope>
</reference>
<reference key="11">
    <citation type="journal article" date="2009" name="J. Virol.">
        <title>The respiratory syncytial virus matrix protein possesses a Crm1-mediated nuclear export mechanism.</title>
        <authorList>
            <person name="Ghildyal R."/>
            <person name="Ho A."/>
            <person name="Dias M."/>
            <person name="Soegiyono L."/>
            <person name="Bardin P.G."/>
            <person name="Tran K.C."/>
            <person name="Teng M.N."/>
            <person name="Jans D.A."/>
        </authorList>
    </citation>
    <scope>FUNCTION</scope>
    <scope>NUCLEAR EXPORT SIGNAL</scope>
    <scope>SUBCELLULAR LOCATION</scope>
</reference>
<reference key="12">
    <citation type="journal article" date="2013" name="J. Virol.">
        <title>The respiratory syncytial virus fusion protein targets to the perimeter of inclusion bodies and facilitates filament formation by a cytoplasmic tail-dependent mechanism.</title>
        <authorList>
            <person name="Baviskar P.S."/>
            <person name="Hotard A.L."/>
            <person name="Moore M.L."/>
            <person name="Oomens A.G."/>
        </authorList>
    </citation>
    <scope>FUNCTION</scope>
    <scope>SUBCELLULAR LOCATION</scope>
</reference>
<reference key="13">
    <citation type="journal article" date="2014" name="J. Virol.">
        <title>The Thr205 phosphorylation site within respiratory syncytial virus matrix (M) protein modulates M oligomerization and virus production.</title>
        <authorList>
            <person name="Bajorek M."/>
            <person name="Caly L."/>
            <person name="Tran K.C."/>
            <person name="Maertens G.N."/>
            <person name="Tripp R.A."/>
            <person name="Bacharach E."/>
            <person name="Teng M.N."/>
            <person name="Ghildyal R."/>
            <person name="Jans D.A."/>
        </authorList>
    </citation>
    <scope>FUNCTION</scope>
    <scope>SUBCELLULAR LOCATION</scope>
    <scope>SUBUNIT</scope>
    <scope>MUTAGENESIS OF THR-205</scope>
    <scope>PHOSPHORYLATION AT THR-205</scope>
</reference>
<reference key="14">
    <citation type="journal article" date="2015" name="Mol. Cell. Proteomics">
        <title>New host factors important for respiratory syncytial virus (RSV) replication revealed by a novel microfluidics screen for interactors of matrix (M) protein.</title>
        <authorList>
            <person name="Kipper S."/>
            <person name="Hamad S."/>
            <person name="Caly L."/>
            <person name="Avrahami D."/>
            <person name="Bacharach E."/>
            <person name="Jans D.A."/>
            <person name="Gerber D."/>
            <person name="Bajorek M."/>
        </authorList>
    </citation>
    <scope>INTERACTION WITH HOST CAV1</scope>
    <scope>INTERACTION WITH HOST CFL1</scope>
    <scope>INTERACTION WITH HOST ZNF502</scope>
</reference>
<reference key="15">
    <citation type="journal article" date="2016" name="J. Virol.">
        <title>The Respiratory Syncytial Virus Phosphoprotein, Matrix Protein, and Fusion Protein Carboxy-Terminal Domain Drive Efficient Filamentous Virus-Like Particle Formation.</title>
        <authorList>
            <person name="Meshram C.D."/>
            <person name="Baviskar P.S."/>
            <person name="Ognibene C.M."/>
            <person name="Oomens A.G.P."/>
        </authorList>
    </citation>
    <scope>FUNCTION</scope>
</reference>
<reference key="16">
    <citation type="journal article" date="2017" name="PLoS ONE">
        <title>Interaction of the Human Respiratory Syncytial Virus matrix protein with cellular adaptor protein complex 3 plays a critical role in trafficking.</title>
        <authorList>
            <person name="Ward C."/>
            <person name="Maselko M."/>
            <person name="Lupfer C."/>
            <person name="Prescott M."/>
            <person name="Pastey M.K."/>
        </authorList>
    </citation>
    <scope>SUBCELLULAR LOCATION</scope>
    <scope>INTERACTION WITH HOST AP3M1</scope>
</reference>
<reference key="17">
    <citation type="journal article" date="2018" name="Viruses">
        <title>Molecular Requirements for Self-Interaction of the Respiratory Syncytial Virus Matrix Protein in Living Mammalian Cells.</title>
        <authorList>
            <person name="Trevisan M."/>
            <person name="Di Antonio V."/>
            <person name="Radeghieri A."/>
            <person name="Palu G."/>
            <person name="Ghildyal R."/>
            <person name="Alvisi G."/>
        </authorList>
    </citation>
    <scope>SUBUNIT</scope>
</reference>
<reference key="18">
    <citation type="journal article" date="2021" name="Cells">
        <title>Respiratory Syncytial Virus Matrix Protein-Chromatin Association Is Key to Transcriptional Inhibition in Infected Cells.</title>
        <authorList>
            <person name="Li H.M."/>
            <person name="Ghildyal R."/>
            <person name="Hu M."/>
            <person name="Tran K.C."/>
            <person name="Starrs L.M."/>
            <person name="Mills J."/>
            <person name="Teng M.N."/>
            <person name="Jans D.A."/>
        </authorList>
    </citation>
    <scope>FUNCTION</scope>
    <scope>SUBCELLULAR LOCATION</scope>
    <scope>MUTAGENESIS OF ARG-170 AND LYS-172</scope>
</reference>
<reference key="19">
    <citation type="journal article" date="2023" name="J. Virol.">
        <title>The matrix protein of respiratory syncytial virus suppresses interferon signaling via RACK1 association.</title>
        <authorList>
            <person name="Cao J."/>
            <person name="Shi M."/>
            <person name="Zhu L."/>
            <person name="Li X."/>
            <person name="Li A."/>
            <person name="Wu S.Y."/>
            <person name="Chiang C.M."/>
            <person name="Zhang Y."/>
        </authorList>
    </citation>
    <scope>FUNCTION</scope>
    <scope>INTERACTION WITH HOST RACK1</scope>
    <scope>SUBCELLULAR LOCATION</scope>
</reference>
<reference key="20">
    <citation type="journal article" date="2015" name="J. Virol.">
        <title>Dimerization of matrix protein is required for budding of respiratory syncytial virus.</title>
        <authorList>
            <person name="Foerster A."/>
            <person name="Maertens G.N."/>
            <person name="Farrell P.J."/>
            <person name="Bajorek M."/>
        </authorList>
    </citation>
    <scope>X-RAY CRYSTALLOGRAPHY (1.70 ANGSTROMS)</scope>
    <scope>SUBUNIT</scope>
    <scope>FUNCTION</scope>
</reference>
<reference key="21">
    <citation type="journal article" date="2009" name="Proc. Natl. Acad. Sci. U.S.A.">
        <title>Surface features of a Mononegavirales matrix protein indicate sites of membrane interaction.</title>
        <authorList>
            <person name="Money V.A."/>
            <person name="McPhee H.K."/>
            <person name="Mosely J.A."/>
            <person name="Sanderson J.M."/>
            <person name="Yeo R.P."/>
        </authorList>
    </citation>
    <scope>X-RAY CRYSTALLOGRAPHY (1.60 ANGSTROMS)</scope>
</reference>
<reference key="22">
    <citation type="journal article" date="2011" name="Langmuir">
        <title>Influence of lipids on the interfacial disposition of respiratory syncytical virus matrix protein.</title>
        <authorList>
            <person name="McPhee H.K."/>
            <person name="Carlisle J.L."/>
            <person name="Beeby A."/>
            <person name="Money V.A."/>
            <person name="Watson S.M."/>
            <person name="Yeo R.P."/>
            <person name="Sanderson J.M."/>
        </authorList>
    </citation>
    <scope>X-RAY CRYSTALLOGRAPHY (1.86 ANGSTROMS)</scope>
</reference>
<organismHost>
    <name type="scientific">Homo sapiens</name>
    <name type="common">Human</name>
    <dbReference type="NCBI Taxonomy" id="9606"/>
</organismHost>
<dbReference type="EMBL" id="M11486">
    <property type="protein sequence ID" value="AAB59854.1"/>
    <property type="molecule type" value="Genomic_RNA"/>
</dbReference>
<dbReference type="EMBL" id="U50362">
    <property type="protein sequence ID" value="AAB86660.1"/>
    <property type="molecule type" value="Genomic_RNA"/>
</dbReference>
<dbReference type="EMBL" id="U50363">
    <property type="protein sequence ID" value="AAB86672.1"/>
    <property type="molecule type" value="Genomic_RNA"/>
</dbReference>
<dbReference type="EMBL" id="U63644">
    <property type="protein sequence ID" value="AAC55966.1"/>
    <property type="molecule type" value="Genomic_RNA"/>
</dbReference>
<dbReference type="EMBL" id="AF035006">
    <property type="protein sequence ID" value="AAC14898.1"/>
    <property type="molecule type" value="Genomic_RNA"/>
</dbReference>
<dbReference type="PIR" id="A04030">
    <property type="entry name" value="MFNZ"/>
</dbReference>
<dbReference type="PDB" id="2VQP">
    <property type="method" value="X-ray"/>
    <property type="resolution" value="1.60 A"/>
    <property type="chains" value="A=1-256"/>
</dbReference>
<dbReference type="PDB" id="2YKD">
    <property type="method" value="X-ray"/>
    <property type="resolution" value="1.86 A"/>
    <property type="chains" value="A=1-256"/>
</dbReference>
<dbReference type="PDB" id="4D4T">
    <property type="method" value="X-ray"/>
    <property type="resolution" value="1.90 A"/>
    <property type="chains" value="A=1-256"/>
</dbReference>
<dbReference type="PDB" id="4V23">
    <property type="method" value="X-ray"/>
    <property type="resolution" value="1.70 A"/>
    <property type="chains" value="A=1-256"/>
</dbReference>
<dbReference type="PDBsum" id="2VQP"/>
<dbReference type="PDBsum" id="2YKD"/>
<dbReference type="PDBsum" id="4D4T"/>
<dbReference type="PDBsum" id="4V23"/>
<dbReference type="SMR" id="P0DOE7"/>
<dbReference type="IntAct" id="P0DOE7">
    <property type="interactions" value="29"/>
</dbReference>
<dbReference type="iPTMnet" id="P0DOE7"/>
<dbReference type="Reactome" id="R-HSA-9820960">
    <property type="pathway name" value="Respiratory syncytial virus (RSV) attachment and entry"/>
</dbReference>
<dbReference type="Reactome" id="R-HSA-9820962">
    <property type="pathway name" value="Assembly and release of respiratory syncytial virus (RSV) virions"/>
</dbReference>
<dbReference type="Reactome" id="R-HSA-9828721">
    <property type="pathway name" value="Translation of respiratory syncytial virus mRNAs"/>
</dbReference>
<dbReference type="Reactome" id="R-HSA-9828806">
    <property type="pathway name" value="Maturation of hRSV A proteins"/>
</dbReference>
<dbReference type="Reactome" id="R-HSA-9833110">
    <property type="pathway name" value="RSV-host interactions"/>
</dbReference>
<dbReference type="EvolutionaryTrace" id="P0DOE7"/>
<dbReference type="Proteomes" id="UP000007678">
    <property type="component" value="Genome"/>
</dbReference>
<dbReference type="Proteomes" id="UP000134464">
    <property type="component" value="Genome"/>
</dbReference>
<dbReference type="Proteomes" id="UP000181145">
    <property type="component" value="Genome"/>
</dbReference>
<dbReference type="Proteomes" id="UP000181262">
    <property type="component" value="Genome"/>
</dbReference>
<dbReference type="Proteomes" id="UP000181559">
    <property type="component" value="Genome"/>
</dbReference>
<dbReference type="GO" id="GO:0030430">
    <property type="term" value="C:host cell cytoplasm"/>
    <property type="evidence" value="ECO:0007669"/>
    <property type="project" value="UniProtKB-SubCell"/>
</dbReference>
<dbReference type="GO" id="GO:0042025">
    <property type="term" value="C:host cell nucleus"/>
    <property type="evidence" value="ECO:0007669"/>
    <property type="project" value="UniProtKB-SubCell"/>
</dbReference>
<dbReference type="GO" id="GO:0020002">
    <property type="term" value="C:host cell plasma membrane"/>
    <property type="evidence" value="ECO:0007669"/>
    <property type="project" value="UniProtKB-SubCell"/>
</dbReference>
<dbReference type="GO" id="GO:0016020">
    <property type="term" value="C:membrane"/>
    <property type="evidence" value="ECO:0007669"/>
    <property type="project" value="UniProtKB-KW"/>
</dbReference>
<dbReference type="GO" id="GO:0019031">
    <property type="term" value="C:viral envelope"/>
    <property type="evidence" value="ECO:0007669"/>
    <property type="project" value="InterPro"/>
</dbReference>
<dbReference type="GO" id="GO:0019033">
    <property type="term" value="C:viral tegument"/>
    <property type="evidence" value="ECO:0000304"/>
    <property type="project" value="Reactome"/>
</dbReference>
<dbReference type="GO" id="GO:0039660">
    <property type="term" value="F:structural constituent of virion"/>
    <property type="evidence" value="ECO:0007669"/>
    <property type="project" value="UniProtKB-KW"/>
</dbReference>
<dbReference type="GO" id="GO:0019068">
    <property type="term" value="P:virion assembly"/>
    <property type="evidence" value="ECO:0007669"/>
    <property type="project" value="InterPro"/>
</dbReference>
<dbReference type="Gene3D" id="2.70.20.30">
    <property type="entry name" value="HRSV-S2 matrix protein, N-terminal domain"/>
    <property type="match status" value="1"/>
</dbReference>
<dbReference type="InterPro" id="IPR055461">
    <property type="entry name" value="Matrix_Pneumo_C"/>
</dbReference>
<dbReference type="InterPro" id="IPR005056">
    <property type="entry name" value="MATRX_N_pneumovirus"/>
</dbReference>
<dbReference type="InterPro" id="IPR043062">
    <property type="entry name" value="Pneu_matrix_N"/>
</dbReference>
<dbReference type="Pfam" id="PF23766">
    <property type="entry name" value="Matrix_Pneumo_C"/>
    <property type="match status" value="1"/>
</dbReference>
<dbReference type="Pfam" id="PF03393">
    <property type="entry name" value="Matrix_Pneumo_N"/>
    <property type="match status" value="1"/>
</dbReference>
<sequence length="256" mass="28714">METYVNKLHEGSTYTAAVQYNVLEKDDDPASLTIWVPMFQSSMPADLLIKELANVNILVKQISTPKGPSLRVMINSRSAVLAQMPSKFTICANVSLDERSKLAYDVTTPCEIKACSLTCLKSKNMLTTVKDLTMKTLNPTHDIIALCEFENIVTSKKVIIPTYLRSISVRNKDLNTLENITTTEFKNAITNAKIIPYSGLLLVITVTDNKGAFKYIKPQSQFIVDLGAYLEKESIYYVTTNWKHTATRFAIKPMED</sequence>
<gene>
    <name type="primary">M</name>
</gene>
<feature type="chain" id="PRO_0000142748" description="Matrix protein">
    <location>
        <begin position="1"/>
        <end position="256"/>
    </location>
</feature>
<feature type="region of interest" description="Interaction with M2-1" evidence="6">
    <location>
        <begin position="1"/>
        <end position="110"/>
    </location>
</feature>
<feature type="region of interest" description="Nuclear targeting and binding to host importin KPNB1" evidence="5">
    <location>
        <begin position="110"/>
        <end position="183"/>
    </location>
</feature>
<feature type="short sequence motif" description="Nuclear export signal" evidence="7">
    <location>
        <begin position="194"/>
        <end position="206"/>
    </location>
</feature>
<feature type="modified residue" description="Phosphothreonine; by host CK2" evidence="9">
    <location>
        <position position="205"/>
    </location>
</feature>
<feature type="mutagenesis site" description="About 80% loss of host transcriptional inhibition activity; when associated with A-172." evidence="15">
    <original>R</original>
    <variation>A</variation>
    <location>
        <position position="170"/>
    </location>
</feature>
<feature type="mutagenesis site" description="About 80% loss of host transcriptional inhibition activity; when associated with A-170." evidence="15">
    <original>K</original>
    <variation>A</variation>
    <location>
        <position position="172"/>
    </location>
</feature>
<feature type="mutagenesis site" description="Loss of higher-order oligomer assembly." evidence="9">
    <original>T</original>
    <variation>A</variation>
    <location>
        <position position="205"/>
    </location>
</feature>
<feature type="strand" evidence="20">
    <location>
        <begin position="2"/>
        <end position="7"/>
    </location>
</feature>
<feature type="strand" evidence="20">
    <location>
        <begin position="12"/>
        <end position="28"/>
    </location>
</feature>
<feature type="strand" evidence="20">
    <location>
        <begin position="31"/>
        <end position="35"/>
    </location>
</feature>
<feature type="strand" evidence="20">
    <location>
        <begin position="39"/>
        <end position="41"/>
    </location>
</feature>
<feature type="helix" evidence="20">
    <location>
        <begin position="45"/>
        <end position="52"/>
    </location>
</feature>
<feature type="strand" evidence="20">
    <location>
        <begin position="56"/>
        <end position="64"/>
    </location>
</feature>
<feature type="strand" evidence="20">
    <location>
        <begin position="67"/>
        <end position="75"/>
    </location>
</feature>
<feature type="helix" evidence="20">
    <location>
        <begin position="79"/>
        <end position="83"/>
    </location>
</feature>
<feature type="strand" evidence="20">
    <location>
        <begin position="86"/>
        <end position="91"/>
    </location>
</feature>
<feature type="helix" evidence="20">
    <location>
        <begin position="92"/>
        <end position="95"/>
    </location>
</feature>
<feature type="strand" evidence="20">
    <location>
        <begin position="108"/>
        <end position="120"/>
    </location>
</feature>
<feature type="helix" evidence="20">
    <location>
        <begin position="123"/>
        <end position="125"/>
    </location>
</feature>
<feature type="strand" evidence="20">
    <location>
        <begin position="126"/>
        <end position="128"/>
    </location>
</feature>
<feature type="helix" evidence="20">
    <location>
        <begin position="129"/>
        <end position="132"/>
    </location>
</feature>
<feature type="strand" evidence="20">
    <location>
        <begin position="140"/>
        <end position="151"/>
    </location>
</feature>
<feature type="turn" evidence="20">
    <location>
        <begin position="152"/>
        <end position="154"/>
    </location>
</feature>
<feature type="strand" evidence="20">
    <location>
        <begin position="157"/>
        <end position="167"/>
    </location>
</feature>
<feature type="helix" evidence="20">
    <location>
        <begin position="171"/>
        <end position="174"/>
    </location>
</feature>
<feature type="turn" evidence="20">
    <location>
        <begin position="178"/>
        <end position="180"/>
    </location>
</feature>
<feature type="helix" evidence="20">
    <location>
        <begin position="183"/>
        <end position="190"/>
    </location>
</feature>
<feature type="strand" evidence="20">
    <location>
        <begin position="193"/>
        <end position="205"/>
    </location>
</feature>
<feature type="helix" evidence="20">
    <location>
        <begin position="211"/>
        <end position="213"/>
    </location>
</feature>
<feature type="strand" evidence="20">
    <location>
        <begin position="221"/>
        <end position="225"/>
    </location>
</feature>
<feature type="helix" evidence="20">
    <location>
        <begin position="227"/>
        <end position="229"/>
    </location>
</feature>
<feature type="helix" evidence="20">
    <location>
        <begin position="235"/>
        <end position="241"/>
    </location>
</feature>
<feature type="strand" evidence="20">
    <location>
        <begin position="242"/>
        <end position="253"/>
    </location>
</feature>
<comment type="function">
    <text evidence="1 2 3 4 6 7 8 9 11 12 15 16 17">Plays a crucial role in virus assembly into filaments and budding (PubMed:23903836, PubMed:24672034, PubMed:25673702, PubMed:27654298). Early in infection, localizes in the nucleus where it inhibits host cell transcription through direct binding to host chromatin (PubMed:12827470, PubMed:34685766). Later in infection, traffics to the cytoplasm through the action of host CRM1 to associate with inclusion bodies, the site of viral transcription and replication (PubMed:19297465, PubMed:23903836). During virus assembly and budding, acts as a bridge between the nucleocapsid and the lipid bilayer (PubMed:11907323, PubMed:12350355, PubMed:15958665, PubMed:18579594). Also plays a role in the inhibition of host interferon-beta response in a RACK1-dependent manner (PubMed:37712706).</text>
</comment>
<comment type="subunit">
    <text evidence="4 5 6 9 10 11 13 14 16">Forms dimers (PubMed:25673702, PubMed:29510513). Forms higher-order oligomers (PubMed:24672034). Interacts with glycoprotein G (via N-terminus) (PubMed:15958665). Interacts with protein M2-1; this interaction directs the matrix protein localization to cytoplasmic inclusions comprising viral proteins L, N, P, and M2-1 and mediates the matrix protein association with the nucleocapsid (PubMed:18579594). Interacts with host importin KPNB1; this interaction mediates nuclear import of the matrix protein early during infection (PubMed:16171404). Interacts with host AP3M1; this interaction plays an essential role in trafficking the matrix protein in host cells (PubMed:29028839). Interacts with host CAV1; this interaction probably facilitates viral budding (PubMed:25556234). Interacts with host CFL1; this interaction probably facilitates viral replication (PubMed:25556234). Interacts with host ZNF502; this interaction probably facilitates viral release (PubMed:25556234). Interacts with host RACK1 (PubMed:37712706).</text>
</comment>
<comment type="interaction">
    <interactant intactId="EBI-10042882">
        <id>P0DOE7</id>
    </interactant>
    <interactant intactId="EBI-10042927">
        <id>P04545</id>
        <label>M2-1</label>
    </interactant>
    <organismsDiffer>false</organismsDiffer>
    <experiments>3</experiments>
</comment>
<comment type="interaction">
    <interactant intactId="EBI-10042882">
        <id>P0DOE7</id>
    </interactant>
    <interactant intactId="EBI-603614">
        <id>Q03135</id>
        <label>CAV1</label>
    </interactant>
    <organismsDiffer>true</organismsDiffer>
    <experiments>2</experiments>
</comment>
<comment type="interaction">
    <interactant intactId="EBI-10042882">
        <id>P0DOE7</id>
    </interactant>
    <interactant intactId="EBI-3905936">
        <id>P56539</id>
        <label>CAV3</label>
    </interactant>
    <organismsDiffer>true</organismsDiffer>
    <experiments>2</experiments>
</comment>
<comment type="interaction">
    <interactant intactId="EBI-10042882">
        <id>P0DOE7</id>
    </interactant>
    <interactant intactId="EBI-352733">
        <id>P23528</id>
        <label>CFL1</label>
    </interactant>
    <organismsDiffer>true</organismsDiffer>
    <experiments>2</experiments>
</comment>
<comment type="interaction">
    <interactant intactId="EBI-10042882">
        <id>P0DOE7</id>
    </interactant>
    <interactant intactId="EBI-78579">
        <id>P06748</id>
        <label>NPM1</label>
    </interactant>
    <organismsDiffer>true</organismsDiffer>
    <experiments>3</experiments>
</comment>
<comment type="interaction">
    <interactant intactId="EBI-10042882">
        <id>P0DOE7</id>
    </interactant>
    <interactant intactId="EBI-1047508">
        <id>Q9NS69</id>
        <label>TOMM22</label>
    </interactant>
    <organismsDiffer>true</organismsDiffer>
    <experiments>2</experiments>
</comment>
<comment type="interaction">
    <interactant intactId="EBI-10042882">
        <id>P0DOE7</id>
    </interactant>
    <interactant intactId="EBI-10273699">
        <id>Q8TBZ5</id>
        <label>ZNF502</label>
    </interactant>
    <organismsDiffer>true</organismsDiffer>
    <experiments>3</experiments>
</comment>
<comment type="subcellular location">
    <subcellularLocation>
        <location evidence="9">Virion</location>
    </subcellularLocation>
    <subcellularLocation>
        <location evidence="4 7 9 13 16">Host cytoplasm</location>
    </subcellularLocation>
    <subcellularLocation>
        <location evidence="3 4 5 7 15">Host nucleus</location>
    </subcellularLocation>
    <subcellularLocation>
        <location evidence="2">Host cell membrane</location>
        <topology evidence="19">Peripheral membrane protein</topology>
        <orientation evidence="19">Cytoplasmic side</orientation>
    </subcellularLocation>
    <text evidence="8 19">In the cytoplasm, associates with inclusion bodies (PubMed:23903836). During bud formation, associates at the inner side of the plasma membrane of infected cells.</text>
</comment>
<comment type="PTM">
    <text evidence="9">Phosphorylation is important for oligomerization.</text>
</comment>
<comment type="similarity">
    <text evidence="19">Belongs to the pneumovirinae M protein family.</text>
</comment>
<accession>P0DOE7</accession>
<accession>P03419</accession>
<accession>Q77YB3</accession>
<organism>
    <name type="scientific">Human respiratory syncytial virus A (strain A2)</name>
    <dbReference type="NCBI Taxonomy" id="11259"/>
    <lineage>
        <taxon>Viruses</taxon>
        <taxon>Riboviria</taxon>
        <taxon>Orthornavirae</taxon>
        <taxon>Negarnaviricota</taxon>
        <taxon>Haploviricotina</taxon>
        <taxon>Monjiviricetes</taxon>
        <taxon>Mononegavirales</taxon>
        <taxon>Pneumoviridae</taxon>
        <taxon>Orthopneumovirus</taxon>
        <taxon>Orthopneumovirus hominis</taxon>
    </lineage>
</organism>
<name>MATRX_HRSVA</name>
<proteinExistence type="evidence at protein level"/>
<evidence type="ECO:0000269" key="1">
    <source>
    </source>
</evidence>
<evidence type="ECO:0000269" key="2">
    <source>
    </source>
</evidence>
<evidence type="ECO:0000269" key="3">
    <source>
    </source>
</evidence>
<evidence type="ECO:0000269" key="4">
    <source>
    </source>
</evidence>
<evidence type="ECO:0000269" key="5">
    <source>
    </source>
</evidence>
<evidence type="ECO:0000269" key="6">
    <source>
    </source>
</evidence>
<evidence type="ECO:0000269" key="7">
    <source>
    </source>
</evidence>
<evidence type="ECO:0000269" key="8">
    <source>
    </source>
</evidence>
<evidence type="ECO:0000269" key="9">
    <source>
    </source>
</evidence>
<evidence type="ECO:0000269" key="10">
    <source>
    </source>
</evidence>
<evidence type="ECO:0000269" key="11">
    <source>
    </source>
</evidence>
<evidence type="ECO:0000269" key="12">
    <source>
    </source>
</evidence>
<evidence type="ECO:0000269" key="13">
    <source>
    </source>
</evidence>
<evidence type="ECO:0000269" key="14">
    <source>
    </source>
</evidence>
<evidence type="ECO:0000269" key="15">
    <source>
    </source>
</evidence>
<evidence type="ECO:0000269" key="16">
    <source>
    </source>
</evidence>
<evidence type="ECO:0000269" key="17">
    <source>
    </source>
</evidence>
<evidence type="ECO:0000303" key="18">
    <source>
    </source>
</evidence>
<evidence type="ECO:0000305" key="19"/>
<evidence type="ECO:0007829" key="20">
    <source>
        <dbReference type="PDB" id="2VQP"/>
    </source>
</evidence>
<keyword id="KW-0002">3D-structure</keyword>
<keyword id="KW-1032">Host cell membrane</keyword>
<keyword id="KW-1035">Host cytoplasm</keyword>
<keyword id="KW-1043">Host membrane</keyword>
<keyword id="KW-1048">Host nucleus</keyword>
<keyword id="KW-0945">Host-virus interaction</keyword>
<keyword id="KW-0472">Membrane</keyword>
<keyword id="KW-0597">Phosphoprotein</keyword>
<keyword id="KW-0468">Viral matrix protein</keyword>
<keyword id="KW-0946">Virion</keyword>